<keyword id="KW-0325">Glycoprotein</keyword>
<keyword id="KW-1185">Reference proteome</keyword>
<keyword id="KW-0964">Secreted</keyword>
<keyword id="KW-0732">Signal</keyword>
<comment type="subcellular location">
    <subcellularLocation>
        <location evidence="4 5">Secreted</location>
    </subcellularLocation>
</comment>
<organism>
    <name type="scientific">Arthroderma benhamiae (strain ATCC MYA-4681 / CBS 112371)</name>
    <name type="common">Trichophyton mentagrophytes</name>
    <dbReference type="NCBI Taxonomy" id="663331"/>
    <lineage>
        <taxon>Eukaryota</taxon>
        <taxon>Fungi</taxon>
        <taxon>Dikarya</taxon>
        <taxon>Ascomycota</taxon>
        <taxon>Pezizomycotina</taxon>
        <taxon>Eurotiomycetes</taxon>
        <taxon>Eurotiomycetidae</taxon>
        <taxon>Onygenales</taxon>
        <taxon>Arthrodermataceae</taxon>
        <taxon>Trichophyton</taxon>
    </lineage>
</organism>
<name>A7590_ARTBC</name>
<accession>D4ATM6</accession>
<reference key="1">
    <citation type="journal article" date="2011" name="Genome Biol.">
        <title>Comparative and functional genomics provide insights into the pathogenicity of dermatophytic fungi.</title>
        <authorList>
            <person name="Burmester A."/>
            <person name="Shelest E."/>
            <person name="Gloeckner G."/>
            <person name="Heddergott C."/>
            <person name="Schindler S."/>
            <person name="Staib P."/>
            <person name="Heidel A."/>
            <person name="Felder M."/>
            <person name="Petzold A."/>
            <person name="Szafranski K."/>
            <person name="Feuermann M."/>
            <person name="Pedruzzi I."/>
            <person name="Priebe S."/>
            <person name="Groth M."/>
            <person name="Winkler R."/>
            <person name="Li W."/>
            <person name="Kniemeyer O."/>
            <person name="Schroeckh V."/>
            <person name="Hertweck C."/>
            <person name="Hube B."/>
            <person name="White T.C."/>
            <person name="Platzer M."/>
            <person name="Guthke R."/>
            <person name="Heitman J."/>
            <person name="Woestemeyer J."/>
            <person name="Zipfel P.F."/>
            <person name="Monod M."/>
            <person name="Brakhage A.A."/>
        </authorList>
    </citation>
    <scope>NUCLEOTIDE SEQUENCE [LARGE SCALE GENOMIC DNA]</scope>
    <scope>IDENTIFICATION BY MASS SPECTROMETRY</scope>
    <scope>SUBCELLULAR LOCATION</scope>
    <source>
        <strain>ATCC MYA-4681 / CBS 112371</strain>
    </source>
</reference>
<reference key="2">
    <citation type="journal article" date="2011" name="Proteomics">
        <title>Identification of novel secreted proteases during extracellular proteolysis by dermatophytes at acidic pH.</title>
        <authorList>
            <person name="Sriranganadane D."/>
            <person name="Waridel P."/>
            <person name="Salamin K."/>
            <person name="Feuermann M."/>
            <person name="Mignon B."/>
            <person name="Staib P."/>
            <person name="Neuhaus J.M."/>
            <person name="Quadroni M."/>
            <person name="Monod M."/>
        </authorList>
    </citation>
    <scope>IDENTIFICATION BY MASS SPECTROMETRY</scope>
    <scope>SUBCELLULAR LOCATION</scope>
</reference>
<proteinExistence type="evidence at protein level"/>
<dbReference type="EMBL" id="ABSU01000009">
    <property type="protein sequence ID" value="EFE33645.1"/>
    <property type="molecule type" value="Genomic_DNA"/>
</dbReference>
<dbReference type="RefSeq" id="XP_003014285.1">
    <property type="nucleotide sequence ID" value="XM_003014239.1"/>
</dbReference>
<dbReference type="STRING" id="663331.D4ATM6"/>
<dbReference type="GeneID" id="9521703"/>
<dbReference type="KEGG" id="abe:ARB_07590"/>
<dbReference type="eggNOG" id="ENOG502S0H4">
    <property type="taxonomic scope" value="Eukaryota"/>
</dbReference>
<dbReference type="HOGENOM" id="CLU_083369_0_0_1"/>
<dbReference type="OMA" id="FKQIVHV"/>
<dbReference type="OrthoDB" id="152248at2759"/>
<dbReference type="Proteomes" id="UP000008866">
    <property type="component" value="Unassembled WGS sequence"/>
</dbReference>
<dbReference type="GO" id="GO:0005576">
    <property type="term" value="C:extracellular region"/>
    <property type="evidence" value="ECO:0007669"/>
    <property type="project" value="UniProtKB-SubCell"/>
</dbReference>
<dbReference type="InterPro" id="IPR025649">
    <property type="entry name" value="DUF4360"/>
</dbReference>
<dbReference type="PANTHER" id="PTHR38847">
    <property type="match status" value="1"/>
</dbReference>
<dbReference type="PANTHER" id="PTHR38847:SF1">
    <property type="entry name" value="PSEUDOURIDINE SYNTHASE RSUA_RLUA-LIKE DOMAIN-CONTAINING PROTEIN"/>
    <property type="match status" value="1"/>
</dbReference>
<dbReference type="Pfam" id="PF14273">
    <property type="entry name" value="DUF4360"/>
    <property type="match status" value="1"/>
</dbReference>
<feature type="signal peptide" evidence="1">
    <location>
        <begin position="1"/>
        <end position="18"/>
    </location>
</feature>
<feature type="chain" id="PRO_5003054386" description="Uncharacterized secreted protein ARB_07590">
    <location>
        <begin position="19"/>
        <end position="245"/>
    </location>
</feature>
<feature type="region of interest" description="Disordered" evidence="3">
    <location>
        <begin position="21"/>
        <end position="66"/>
    </location>
</feature>
<feature type="glycosylation site" description="N-linked (GlcNAc...) asparagine" evidence="2">
    <location>
        <position position="189"/>
    </location>
</feature>
<feature type="glycosylation site" description="N-linked (GlcNAc...) asparagine" evidence="2">
    <location>
        <position position="225"/>
    </location>
</feature>
<sequence>MKSAAILALLAQALAVTAQPVEGDRTPGTRTLDLPNFPGGSVPTRGVEKRADLPPDNGGGNAPDPDKVHIVGVTYGGTGCPDGTVSHVLSDDRQIMTLIFDQYVAQIGPGVNTKENRKNCQLNINLRYPGGFQFSVFSADYRGYANLEKGVSGTQKSIYYFSGQTEQTSTSTTWKGPIDKDYILHDEANQTSTVWSPCGANGALNINSQVRLTATDRNARGILTNDSVDTSFKQIVHVRWQQCTN</sequence>
<evidence type="ECO:0000255" key="1"/>
<evidence type="ECO:0000255" key="2">
    <source>
        <dbReference type="PROSITE-ProRule" id="PRU00498"/>
    </source>
</evidence>
<evidence type="ECO:0000256" key="3">
    <source>
        <dbReference type="SAM" id="MobiDB-lite"/>
    </source>
</evidence>
<evidence type="ECO:0000269" key="4">
    <source>
    </source>
</evidence>
<evidence type="ECO:0000269" key="5">
    <source>
    </source>
</evidence>
<protein>
    <recommendedName>
        <fullName>Uncharacterized secreted protein ARB_07590</fullName>
    </recommendedName>
</protein>
<gene>
    <name type="ORF">ARB_07590</name>
</gene>